<keyword id="KW-0004">4Fe-4S</keyword>
<keyword id="KW-0249">Electron transport</keyword>
<keyword id="KW-0408">Iron</keyword>
<keyword id="KW-0411">Iron-sulfur</keyword>
<keyword id="KW-0479">Metal-binding</keyword>
<keyword id="KW-0496">Mitochondrion</keyword>
<keyword id="KW-0520">NAD</keyword>
<keyword id="KW-0560">Oxidoreductase</keyword>
<keyword id="KW-0677">Repeat</keyword>
<keyword id="KW-0679">Respiratory chain</keyword>
<keyword id="KW-1278">Translocase</keyword>
<keyword id="KW-0813">Transport</keyword>
<keyword id="KW-0830">Ubiquinone</keyword>
<feature type="chain" id="PRO_0000118719" description="NADH-ubiquinone oxidoreductase subunit 8">
    <location>
        <begin position="1"/>
        <end position="145"/>
    </location>
</feature>
<feature type="domain" description="4Fe-4S ferredoxin-type 1" evidence="2">
    <location>
        <begin position="43"/>
        <end position="73"/>
    </location>
</feature>
<feature type="domain" description="4Fe-4S ferredoxin-type 2" evidence="2">
    <location>
        <begin position="83"/>
        <end position="112"/>
    </location>
</feature>
<feature type="binding site" evidence="1">
    <location>
        <position position="53"/>
    </location>
    <ligand>
        <name>[4Fe-4S] cluster</name>
        <dbReference type="ChEBI" id="CHEBI:49883"/>
        <label>1</label>
    </ligand>
</feature>
<feature type="binding site" evidence="1">
    <location>
        <position position="56"/>
    </location>
    <ligand>
        <name>[4Fe-4S] cluster</name>
        <dbReference type="ChEBI" id="CHEBI:49883"/>
        <label>1</label>
    </ligand>
</feature>
<feature type="binding site" evidence="1">
    <location>
        <position position="59"/>
    </location>
    <ligand>
        <name>[4Fe-4S] cluster</name>
        <dbReference type="ChEBI" id="CHEBI:49883"/>
        <label>1</label>
    </ligand>
</feature>
<feature type="binding site" evidence="1">
    <location>
        <position position="63"/>
    </location>
    <ligand>
        <name>[4Fe-4S] cluster</name>
        <dbReference type="ChEBI" id="CHEBI:49883"/>
        <label>2</label>
    </ligand>
</feature>
<feature type="binding site" evidence="1">
    <location>
        <position position="92"/>
    </location>
    <ligand>
        <name>[4Fe-4S] cluster</name>
        <dbReference type="ChEBI" id="CHEBI:49883"/>
        <label>2</label>
    </ligand>
</feature>
<feature type="binding site" evidence="1">
    <location>
        <position position="95"/>
    </location>
    <ligand>
        <name>[4Fe-4S] cluster</name>
        <dbReference type="ChEBI" id="CHEBI:49883"/>
        <label>2</label>
    </ligand>
</feature>
<feature type="binding site" evidence="1">
    <location>
        <position position="98"/>
    </location>
    <ligand>
        <name>[4Fe-4S] cluster</name>
        <dbReference type="ChEBI" id="CHEBI:49883"/>
        <label>2</label>
    </ligand>
</feature>
<feature type="binding site" evidence="1">
    <location>
        <position position="102"/>
    </location>
    <ligand>
        <name>[4Fe-4S] cluster</name>
        <dbReference type="ChEBI" id="CHEBI:49883"/>
        <label>1</label>
    </ligand>
</feature>
<organism>
    <name type="scientific">Trypanosoma brucei brucei</name>
    <dbReference type="NCBI Taxonomy" id="5702"/>
    <lineage>
        <taxon>Eukaryota</taxon>
        <taxon>Discoba</taxon>
        <taxon>Euglenozoa</taxon>
        <taxon>Kinetoplastea</taxon>
        <taxon>Metakinetoplastina</taxon>
        <taxon>Trypanosomatida</taxon>
        <taxon>Trypanosomatidae</taxon>
        <taxon>Trypanosoma</taxon>
    </lineage>
</organism>
<comment type="function">
    <text evidence="1">Core subunit of the mitochondrial membrane respiratory chain NADH dehydrogenase (Complex I) that is believed to belong to the minimal assembly required for catalysis. Complex I functions in the transfer of electrons from NADH to the respiratory chain. The immediate electron acceptor for the enzyme is believed to be ubiquinone (By similarity). May donate electrons to ubiquinone.</text>
</comment>
<comment type="catalytic activity">
    <reaction>
        <text>a ubiquinone + NADH + 5 H(+)(in) = a ubiquinol + NAD(+) + 4 H(+)(out)</text>
        <dbReference type="Rhea" id="RHEA:29091"/>
        <dbReference type="Rhea" id="RHEA-COMP:9565"/>
        <dbReference type="Rhea" id="RHEA-COMP:9566"/>
        <dbReference type="ChEBI" id="CHEBI:15378"/>
        <dbReference type="ChEBI" id="CHEBI:16389"/>
        <dbReference type="ChEBI" id="CHEBI:17976"/>
        <dbReference type="ChEBI" id="CHEBI:57540"/>
        <dbReference type="ChEBI" id="CHEBI:57945"/>
        <dbReference type="EC" id="7.1.1.2"/>
    </reaction>
</comment>
<comment type="cofactor">
    <cofactor evidence="1">
        <name>[4Fe-4S] cluster</name>
        <dbReference type="ChEBI" id="CHEBI:49883"/>
    </cofactor>
    <text evidence="1">Binds 2 [4Fe-4S] clusters per subunit.</text>
</comment>
<comment type="subcellular location">
    <subcellularLocation>
        <location>Mitochondrion</location>
    </subcellularLocation>
</comment>
<comment type="developmental stage">
    <text>Fully edited transcripts more abundant in the bloodstream form of T.brucei than in the procyclic forms.</text>
</comment>
<comment type="similarity">
    <text evidence="3">Belongs to the complex I 23 kDa subunit family.</text>
</comment>
<evidence type="ECO:0000250" key="1"/>
<evidence type="ECO:0000255" key="2">
    <source>
        <dbReference type="PROSITE-ProRule" id="PRU00711"/>
    </source>
</evidence>
<evidence type="ECO:0000305" key="3"/>
<sequence length="145" mass="17129">MFFFDFLFFFFVCFYMCFVCCVTICLPIELTIVSLLVRGNHFLRFYWCGLERCIACRLCDLICPSLALDVRVGWSFGGHRFADWFTLSYRRCIYCGFCMHVCPTDAITHSLFVMCFCCLAMYLLAPKFLLFGCCFMLFDFYLCFV</sequence>
<proteinExistence type="evidence at transcript level"/>
<geneLocation type="mitochondrion"/>
<dbReference type="EC" id="7.1.1.2"/>
<dbReference type="EMBL" id="M63820">
    <property type="protein sequence ID" value="AAA91499.1"/>
    <property type="molecule type" value="mRNA"/>
</dbReference>
<dbReference type="PIR" id="A44385">
    <property type="entry name" value="A44385"/>
</dbReference>
<dbReference type="SMR" id="P30826"/>
<dbReference type="GO" id="GO:0016020">
    <property type="term" value="C:membrane"/>
    <property type="evidence" value="ECO:0007669"/>
    <property type="project" value="InterPro"/>
</dbReference>
<dbReference type="GO" id="GO:0005739">
    <property type="term" value="C:mitochondrion"/>
    <property type="evidence" value="ECO:0007669"/>
    <property type="project" value="UniProtKB-SubCell"/>
</dbReference>
<dbReference type="GO" id="GO:0051539">
    <property type="term" value="F:4 iron, 4 sulfur cluster binding"/>
    <property type="evidence" value="ECO:0007669"/>
    <property type="project" value="UniProtKB-KW"/>
</dbReference>
<dbReference type="GO" id="GO:0046872">
    <property type="term" value="F:metal ion binding"/>
    <property type="evidence" value="ECO:0007669"/>
    <property type="project" value="UniProtKB-KW"/>
</dbReference>
<dbReference type="GO" id="GO:0008137">
    <property type="term" value="F:NADH dehydrogenase (ubiquinone) activity"/>
    <property type="evidence" value="ECO:0007669"/>
    <property type="project" value="UniProtKB-EC"/>
</dbReference>
<dbReference type="GO" id="GO:0009060">
    <property type="term" value="P:aerobic respiration"/>
    <property type="evidence" value="ECO:0007669"/>
    <property type="project" value="TreeGrafter"/>
</dbReference>
<dbReference type="Gene3D" id="3.30.70.3270">
    <property type="match status" value="1"/>
</dbReference>
<dbReference type="InterPro" id="IPR017896">
    <property type="entry name" value="4Fe4S_Fe-S-bd"/>
</dbReference>
<dbReference type="InterPro" id="IPR017900">
    <property type="entry name" value="4Fe4S_Fe_S_CS"/>
</dbReference>
<dbReference type="InterPro" id="IPR010226">
    <property type="entry name" value="NADH_quinone_OxRdtase_chainI"/>
</dbReference>
<dbReference type="PANTHER" id="PTHR10849:SF20">
    <property type="entry name" value="NADH DEHYDROGENASE [UBIQUINONE] IRON-SULFUR PROTEIN 8, MITOCHONDRIAL"/>
    <property type="match status" value="1"/>
</dbReference>
<dbReference type="PANTHER" id="PTHR10849">
    <property type="entry name" value="NADH DEHYDROGENASE UBIQUINONE IRON-SULFUR PROTEIN 8, MITOCHONDRIAL"/>
    <property type="match status" value="1"/>
</dbReference>
<dbReference type="Pfam" id="PF12838">
    <property type="entry name" value="Fer4_7"/>
    <property type="match status" value="1"/>
</dbReference>
<dbReference type="SUPFAM" id="SSF54862">
    <property type="entry name" value="4Fe-4S ferredoxins"/>
    <property type="match status" value="1"/>
</dbReference>
<dbReference type="PROSITE" id="PS00198">
    <property type="entry name" value="4FE4S_FER_1"/>
    <property type="match status" value="2"/>
</dbReference>
<dbReference type="PROSITE" id="PS51379">
    <property type="entry name" value="4FE4S_FER_2"/>
    <property type="match status" value="2"/>
</dbReference>
<accession>P30826</accession>
<protein>
    <recommendedName>
        <fullName>NADH-ubiquinone oxidoreductase subunit 8</fullName>
        <ecNumber>7.1.1.2</ecNumber>
    </recommendedName>
    <alternativeName>
        <fullName>Maxicircle iron-sulfur protein 1</fullName>
    </alternativeName>
</protein>
<name>NDUS8_TRYBB</name>
<gene>
    <name type="primary">M-ISP1</name>
    <name type="synonym">CR1</name>
    <name type="synonym">ND8</name>
</gene>
<reference key="1">
    <citation type="journal article" date="1992" name="Mol. Cell. Biol.">
        <title>Maxicircle CR1 transcripts of Trypanosoma brucei are edited and developmentally regulated and encode a putative iron-sulfur protein homologous to an NADH dehydrogenase subunit.</title>
        <authorList>
            <person name="Souza A.E."/>
            <person name="Myler P.J."/>
            <person name="Stuart K."/>
        </authorList>
    </citation>
    <scope>NUCLEOTIDE SEQUENCE [MRNA]</scope>
</reference>